<proteinExistence type="inferred from homology"/>
<protein>
    <recommendedName>
        <fullName evidence="1">ATP synthase gamma chain</fullName>
    </recommendedName>
    <alternativeName>
        <fullName evidence="1">ATP synthase F1 sector gamma subunit</fullName>
    </alternativeName>
    <alternativeName>
        <fullName evidence="1">F-ATPase gamma subunit</fullName>
    </alternativeName>
</protein>
<evidence type="ECO:0000255" key="1">
    <source>
        <dbReference type="HAMAP-Rule" id="MF_00815"/>
    </source>
</evidence>
<organism>
    <name type="scientific">Campylobacter curvus (strain 525.92)</name>
    <dbReference type="NCBI Taxonomy" id="360105"/>
    <lineage>
        <taxon>Bacteria</taxon>
        <taxon>Pseudomonadati</taxon>
        <taxon>Campylobacterota</taxon>
        <taxon>Epsilonproteobacteria</taxon>
        <taxon>Campylobacterales</taxon>
        <taxon>Campylobacteraceae</taxon>
        <taxon>Campylobacter</taxon>
    </lineage>
</organism>
<reference key="1">
    <citation type="submission" date="2007-07" db="EMBL/GenBank/DDBJ databases">
        <title>Genome sequence of Campylobacter curvus 525.92 isolated from human feces.</title>
        <authorList>
            <person name="Fouts D.E."/>
            <person name="Mongodin E.F."/>
            <person name="Puiu D."/>
            <person name="Sebastian Y."/>
            <person name="Miller W.G."/>
            <person name="Mandrell R.E."/>
            <person name="Lastovica A.J."/>
            <person name="Nelson K.E."/>
        </authorList>
    </citation>
    <scope>NUCLEOTIDE SEQUENCE [LARGE SCALE GENOMIC DNA]</scope>
    <source>
        <strain>525.92</strain>
    </source>
</reference>
<name>ATPG_CAMC5</name>
<comment type="function">
    <text evidence="1">Produces ATP from ADP in the presence of a proton gradient across the membrane. The gamma chain is believed to be important in regulating ATPase activity and the flow of protons through the CF(0) complex.</text>
</comment>
<comment type="subunit">
    <text evidence="1">F-type ATPases have 2 components, CF(1) - the catalytic core - and CF(0) - the membrane proton channel. CF(1) has five subunits: alpha(3), beta(3), gamma(1), delta(1), epsilon(1). CF(0) has three main subunits: a, b and c.</text>
</comment>
<comment type="subcellular location">
    <subcellularLocation>
        <location evidence="1">Cell inner membrane</location>
        <topology evidence="1">Peripheral membrane protein</topology>
    </subcellularLocation>
</comment>
<comment type="similarity">
    <text evidence="1">Belongs to the ATPase gamma chain family.</text>
</comment>
<gene>
    <name evidence="1" type="primary">atpG</name>
    <name type="ordered locus">Ccur92_15060</name>
    <name type="ORF">CCV52592_1737</name>
</gene>
<accession>A7H018</accession>
<sequence length="295" mass="33571">MSNLKDIKRKIKSVQNTQKTTRAMKLVSTAKLRKAEEAARYSRVYALKINEVLSEIAYKINQYASVVSESKFFDIKENIEKVDIIFVTADKGLCGGFNVQTIKTVRHMIDEFKAKKIKVRLRAVGKKGIEFFNFQGVDLLETYIGASSSPTYEKAQNIIKDAIDDFVNGVTDKVILVHNGYKNMISQEIRVNDIVPIEPSKIIGVETNSLMEFEPEDNYSKILDELLTKYFEYSMYYSLIDSLAAEHSARMQAMDNATNNAKERVKQLNLAYNKARQESITTELIEIISGVESMK</sequence>
<feature type="chain" id="PRO_1000053180" description="ATP synthase gamma chain">
    <location>
        <begin position="1"/>
        <end position="295"/>
    </location>
</feature>
<keyword id="KW-0066">ATP synthesis</keyword>
<keyword id="KW-0997">Cell inner membrane</keyword>
<keyword id="KW-1003">Cell membrane</keyword>
<keyword id="KW-0139">CF(1)</keyword>
<keyword id="KW-0375">Hydrogen ion transport</keyword>
<keyword id="KW-0406">Ion transport</keyword>
<keyword id="KW-0472">Membrane</keyword>
<keyword id="KW-1185">Reference proteome</keyword>
<keyword id="KW-0813">Transport</keyword>
<dbReference type="EMBL" id="CP000767">
    <property type="protein sequence ID" value="EAU01026.1"/>
    <property type="molecule type" value="Genomic_DNA"/>
</dbReference>
<dbReference type="RefSeq" id="WP_009649341.1">
    <property type="nucleotide sequence ID" value="NC_009715.2"/>
</dbReference>
<dbReference type="SMR" id="A7H018"/>
<dbReference type="STRING" id="360105.CCV52592_1737"/>
<dbReference type="GeneID" id="61002801"/>
<dbReference type="KEGG" id="ccv:CCV52592_1737"/>
<dbReference type="HOGENOM" id="CLU_050669_0_1_7"/>
<dbReference type="OrthoDB" id="9812769at2"/>
<dbReference type="Proteomes" id="UP000006380">
    <property type="component" value="Chromosome"/>
</dbReference>
<dbReference type="GO" id="GO:0005886">
    <property type="term" value="C:plasma membrane"/>
    <property type="evidence" value="ECO:0007669"/>
    <property type="project" value="UniProtKB-SubCell"/>
</dbReference>
<dbReference type="GO" id="GO:0045259">
    <property type="term" value="C:proton-transporting ATP synthase complex"/>
    <property type="evidence" value="ECO:0007669"/>
    <property type="project" value="UniProtKB-KW"/>
</dbReference>
<dbReference type="GO" id="GO:0005524">
    <property type="term" value="F:ATP binding"/>
    <property type="evidence" value="ECO:0007669"/>
    <property type="project" value="UniProtKB-UniRule"/>
</dbReference>
<dbReference type="GO" id="GO:0046933">
    <property type="term" value="F:proton-transporting ATP synthase activity, rotational mechanism"/>
    <property type="evidence" value="ECO:0007669"/>
    <property type="project" value="UniProtKB-UniRule"/>
</dbReference>
<dbReference type="GO" id="GO:0042777">
    <property type="term" value="P:proton motive force-driven plasma membrane ATP synthesis"/>
    <property type="evidence" value="ECO:0007669"/>
    <property type="project" value="UniProtKB-UniRule"/>
</dbReference>
<dbReference type="CDD" id="cd12151">
    <property type="entry name" value="F1-ATPase_gamma"/>
    <property type="match status" value="1"/>
</dbReference>
<dbReference type="FunFam" id="1.10.287.80:FF:000007">
    <property type="entry name" value="ATP synthase gamma chain"/>
    <property type="match status" value="1"/>
</dbReference>
<dbReference type="FunFam" id="3.40.1380.10:FF:000006">
    <property type="entry name" value="ATP synthase gamma chain"/>
    <property type="match status" value="1"/>
</dbReference>
<dbReference type="Gene3D" id="3.40.1380.10">
    <property type="match status" value="1"/>
</dbReference>
<dbReference type="Gene3D" id="1.10.287.80">
    <property type="entry name" value="ATP synthase, gamma subunit, helix hairpin domain"/>
    <property type="match status" value="2"/>
</dbReference>
<dbReference type="HAMAP" id="MF_00815">
    <property type="entry name" value="ATP_synth_gamma_bact"/>
    <property type="match status" value="1"/>
</dbReference>
<dbReference type="InterPro" id="IPR035968">
    <property type="entry name" value="ATP_synth_F1_ATPase_gsu"/>
</dbReference>
<dbReference type="InterPro" id="IPR000131">
    <property type="entry name" value="ATP_synth_F1_gsu"/>
</dbReference>
<dbReference type="NCBIfam" id="TIGR01146">
    <property type="entry name" value="ATPsyn_F1gamma"/>
    <property type="match status" value="1"/>
</dbReference>
<dbReference type="PANTHER" id="PTHR11693">
    <property type="entry name" value="ATP SYNTHASE GAMMA CHAIN"/>
    <property type="match status" value="1"/>
</dbReference>
<dbReference type="PANTHER" id="PTHR11693:SF22">
    <property type="entry name" value="ATP SYNTHASE SUBUNIT GAMMA, MITOCHONDRIAL"/>
    <property type="match status" value="1"/>
</dbReference>
<dbReference type="Pfam" id="PF00231">
    <property type="entry name" value="ATP-synt"/>
    <property type="match status" value="1"/>
</dbReference>
<dbReference type="PRINTS" id="PR00126">
    <property type="entry name" value="ATPASEGAMMA"/>
</dbReference>
<dbReference type="SUPFAM" id="SSF52943">
    <property type="entry name" value="ATP synthase (F1-ATPase), gamma subunit"/>
    <property type="match status" value="1"/>
</dbReference>